<name>ARGC_BRUAB</name>
<proteinExistence type="inferred from homology"/>
<reference key="1">
    <citation type="journal article" date="2005" name="J. Bacteriol.">
        <title>Completion of the genome sequence of Brucella abortus and comparison to the highly similar genomes of Brucella melitensis and Brucella suis.</title>
        <authorList>
            <person name="Halling S.M."/>
            <person name="Peterson-Burch B.D."/>
            <person name="Bricker B.J."/>
            <person name="Zuerner R.L."/>
            <person name="Qing Z."/>
            <person name="Li L.-L."/>
            <person name="Kapur V."/>
            <person name="Alt D.P."/>
            <person name="Olsen S.C."/>
        </authorList>
    </citation>
    <scope>NUCLEOTIDE SEQUENCE [LARGE SCALE GENOMIC DNA]</scope>
    <source>
        <strain>9-941</strain>
    </source>
</reference>
<feature type="chain" id="PRO_1000065139" description="N-acetyl-gamma-glutamyl-phosphate reductase">
    <location>
        <begin position="1"/>
        <end position="310"/>
    </location>
</feature>
<feature type="active site" evidence="1">
    <location>
        <position position="117"/>
    </location>
</feature>
<comment type="function">
    <text evidence="1">Catalyzes the NADPH-dependent reduction of N-acetyl-5-glutamyl phosphate to yield N-acetyl-L-glutamate 5-semialdehyde.</text>
</comment>
<comment type="catalytic activity">
    <reaction evidence="1">
        <text>N-acetyl-L-glutamate 5-semialdehyde + phosphate + NADP(+) = N-acetyl-L-glutamyl 5-phosphate + NADPH + H(+)</text>
        <dbReference type="Rhea" id="RHEA:21588"/>
        <dbReference type="ChEBI" id="CHEBI:15378"/>
        <dbReference type="ChEBI" id="CHEBI:29123"/>
        <dbReference type="ChEBI" id="CHEBI:43474"/>
        <dbReference type="ChEBI" id="CHEBI:57783"/>
        <dbReference type="ChEBI" id="CHEBI:57936"/>
        <dbReference type="ChEBI" id="CHEBI:58349"/>
        <dbReference type="EC" id="1.2.1.38"/>
    </reaction>
</comment>
<comment type="pathway">
    <text evidence="1">Amino-acid biosynthesis; L-arginine biosynthesis; N(2)-acetyl-L-ornithine from L-glutamate: step 3/4.</text>
</comment>
<comment type="subcellular location">
    <subcellularLocation>
        <location evidence="1">Cytoplasm</location>
    </subcellularLocation>
</comment>
<comment type="similarity">
    <text evidence="1">Belongs to the NAGSA dehydrogenase family. Type 2 subfamily.</text>
</comment>
<organism>
    <name type="scientific">Brucella abortus biovar 1 (strain 9-941)</name>
    <dbReference type="NCBI Taxonomy" id="262698"/>
    <lineage>
        <taxon>Bacteria</taxon>
        <taxon>Pseudomonadati</taxon>
        <taxon>Pseudomonadota</taxon>
        <taxon>Alphaproteobacteria</taxon>
        <taxon>Hyphomicrobiales</taxon>
        <taxon>Brucellaceae</taxon>
        <taxon>Brucella/Ochrobactrum group</taxon>
        <taxon>Brucella</taxon>
    </lineage>
</organism>
<protein>
    <recommendedName>
        <fullName evidence="1">N-acetyl-gamma-glutamyl-phosphate reductase</fullName>
        <shortName evidence="1">AGPR</shortName>
        <ecNumber evidence="1">1.2.1.38</ecNumber>
    </recommendedName>
    <alternativeName>
        <fullName evidence="1">N-acetyl-glutamate semialdehyde dehydrogenase</fullName>
        <shortName evidence="1">NAGSA dehydrogenase</shortName>
    </alternativeName>
</protein>
<evidence type="ECO:0000255" key="1">
    <source>
        <dbReference type="HAMAP-Rule" id="MF_01110"/>
    </source>
</evidence>
<sequence>MKPKIFIDGEHGTTGLQIRTRLAERDDLEVISIPEAERRNKDLRADYLRAADIAILCLPDDASKEAVSLLEGHNSTRIIDTSTAHRVHPDWAYGFAELAKGQRERIAEARLVANPGCYPTGAIALVRPLRDAGLLPADYPVSVNAVSGYTGGGKQLIAQMEDRNHPDYLAANNFLYGLPLKHKHVPELQLHGRLDRRPIFSPSVGRFPQGMIVQVPLFLSELEGSPSLAKVHAVLTEHYAGQDIVEVVPLEESAKLPRVDAEELAGKDGMKLFVFGTEDHGQVNLVALLDNLGKGASGAAVQNMNLMLGK</sequence>
<dbReference type="EC" id="1.2.1.38" evidence="1"/>
<dbReference type="EMBL" id="AE017223">
    <property type="protein sequence ID" value="AAX74170.1"/>
    <property type="molecule type" value="Genomic_DNA"/>
</dbReference>
<dbReference type="RefSeq" id="WP_002963923.1">
    <property type="nucleotide sequence ID" value="NC_006932.1"/>
</dbReference>
<dbReference type="SMR" id="Q57DW4"/>
<dbReference type="EnsemblBacteria" id="AAX74170">
    <property type="protein sequence ID" value="AAX74170"/>
    <property type="gene ID" value="BruAb1_0802"/>
</dbReference>
<dbReference type="GeneID" id="93016823"/>
<dbReference type="KEGG" id="bmb:BruAb1_0802"/>
<dbReference type="HOGENOM" id="CLU_077118_0_0_5"/>
<dbReference type="UniPathway" id="UPA00068">
    <property type="reaction ID" value="UER00108"/>
</dbReference>
<dbReference type="Proteomes" id="UP000000540">
    <property type="component" value="Chromosome I"/>
</dbReference>
<dbReference type="GO" id="GO:0005737">
    <property type="term" value="C:cytoplasm"/>
    <property type="evidence" value="ECO:0007669"/>
    <property type="project" value="UniProtKB-SubCell"/>
</dbReference>
<dbReference type="GO" id="GO:0003942">
    <property type="term" value="F:N-acetyl-gamma-glutamyl-phosphate reductase activity"/>
    <property type="evidence" value="ECO:0007669"/>
    <property type="project" value="UniProtKB-UniRule"/>
</dbReference>
<dbReference type="GO" id="GO:0051287">
    <property type="term" value="F:NAD binding"/>
    <property type="evidence" value="ECO:0007669"/>
    <property type="project" value="InterPro"/>
</dbReference>
<dbReference type="GO" id="GO:0006526">
    <property type="term" value="P:L-arginine biosynthetic process"/>
    <property type="evidence" value="ECO:0007669"/>
    <property type="project" value="UniProtKB-UniRule"/>
</dbReference>
<dbReference type="CDD" id="cd23935">
    <property type="entry name" value="AGPR_2_C"/>
    <property type="match status" value="1"/>
</dbReference>
<dbReference type="CDD" id="cd17896">
    <property type="entry name" value="AGPR_2_N"/>
    <property type="match status" value="1"/>
</dbReference>
<dbReference type="Gene3D" id="3.30.360.10">
    <property type="entry name" value="Dihydrodipicolinate Reductase, domain 2"/>
    <property type="match status" value="1"/>
</dbReference>
<dbReference type="Gene3D" id="3.40.50.720">
    <property type="entry name" value="NAD(P)-binding Rossmann-like Domain"/>
    <property type="match status" value="1"/>
</dbReference>
<dbReference type="HAMAP" id="MF_01110">
    <property type="entry name" value="ArgC_type2"/>
    <property type="match status" value="1"/>
</dbReference>
<dbReference type="InterPro" id="IPR023013">
    <property type="entry name" value="AGPR_AS"/>
</dbReference>
<dbReference type="InterPro" id="IPR010136">
    <property type="entry name" value="AGPR_type-2"/>
</dbReference>
<dbReference type="InterPro" id="IPR036291">
    <property type="entry name" value="NAD(P)-bd_dom_sf"/>
</dbReference>
<dbReference type="InterPro" id="IPR050085">
    <property type="entry name" value="NAGSA_dehydrogenase"/>
</dbReference>
<dbReference type="InterPro" id="IPR000534">
    <property type="entry name" value="Semialdehyde_DH_NAD-bd"/>
</dbReference>
<dbReference type="NCBIfam" id="TIGR01851">
    <property type="entry name" value="argC_other"/>
    <property type="match status" value="1"/>
</dbReference>
<dbReference type="PANTHER" id="PTHR32338:SF10">
    <property type="entry name" value="N-ACETYL-GAMMA-GLUTAMYL-PHOSPHATE REDUCTASE, CHLOROPLASTIC-RELATED"/>
    <property type="match status" value="1"/>
</dbReference>
<dbReference type="PANTHER" id="PTHR32338">
    <property type="entry name" value="N-ACETYL-GAMMA-GLUTAMYL-PHOSPHATE REDUCTASE, CHLOROPLASTIC-RELATED-RELATED"/>
    <property type="match status" value="1"/>
</dbReference>
<dbReference type="Pfam" id="PF01118">
    <property type="entry name" value="Semialdhyde_dh"/>
    <property type="match status" value="1"/>
</dbReference>
<dbReference type="Pfam" id="PF22698">
    <property type="entry name" value="Semialdhyde_dhC_1"/>
    <property type="match status" value="1"/>
</dbReference>
<dbReference type="SMART" id="SM00859">
    <property type="entry name" value="Semialdhyde_dh"/>
    <property type="match status" value="1"/>
</dbReference>
<dbReference type="SUPFAM" id="SSF55347">
    <property type="entry name" value="Glyceraldehyde-3-phosphate dehydrogenase-like, C-terminal domain"/>
    <property type="match status" value="1"/>
</dbReference>
<dbReference type="SUPFAM" id="SSF51735">
    <property type="entry name" value="NAD(P)-binding Rossmann-fold domains"/>
    <property type="match status" value="1"/>
</dbReference>
<dbReference type="PROSITE" id="PS01224">
    <property type="entry name" value="ARGC"/>
    <property type="match status" value="1"/>
</dbReference>
<accession>Q57DW4</accession>
<gene>
    <name evidence="1" type="primary">argC</name>
    <name type="ordered locus">BruAb1_0802</name>
</gene>
<keyword id="KW-0028">Amino-acid biosynthesis</keyword>
<keyword id="KW-0055">Arginine biosynthesis</keyword>
<keyword id="KW-0963">Cytoplasm</keyword>
<keyword id="KW-0521">NADP</keyword>
<keyword id="KW-0560">Oxidoreductase</keyword>